<accession>B5F5J5</accession>
<name>E4PD_SALA4</name>
<reference key="1">
    <citation type="journal article" date="2011" name="J. Bacteriol.">
        <title>Comparative genomics of 28 Salmonella enterica isolates: evidence for CRISPR-mediated adaptive sublineage evolution.</title>
        <authorList>
            <person name="Fricke W.F."/>
            <person name="Mammel M.K."/>
            <person name="McDermott P.F."/>
            <person name="Tartera C."/>
            <person name="White D.G."/>
            <person name="Leclerc J.E."/>
            <person name="Ravel J."/>
            <person name="Cebula T.A."/>
        </authorList>
    </citation>
    <scope>NUCLEOTIDE SEQUENCE [LARGE SCALE GENOMIC DNA]</scope>
    <source>
        <strain>SL483</strain>
    </source>
</reference>
<gene>
    <name evidence="1" type="primary">epd</name>
    <name type="ordered locus">SeAg_B3232</name>
</gene>
<evidence type="ECO:0000255" key="1">
    <source>
        <dbReference type="HAMAP-Rule" id="MF_01640"/>
    </source>
</evidence>
<proteinExistence type="inferred from homology"/>
<comment type="function">
    <text evidence="1">Catalyzes the NAD-dependent conversion of D-erythrose 4-phosphate to 4-phosphoerythronate.</text>
</comment>
<comment type="catalytic activity">
    <reaction evidence="1">
        <text>D-erythrose 4-phosphate + NAD(+) + H2O = 4-phospho-D-erythronate + NADH + 2 H(+)</text>
        <dbReference type="Rhea" id="RHEA:12056"/>
        <dbReference type="ChEBI" id="CHEBI:15377"/>
        <dbReference type="ChEBI" id="CHEBI:15378"/>
        <dbReference type="ChEBI" id="CHEBI:16897"/>
        <dbReference type="ChEBI" id="CHEBI:57540"/>
        <dbReference type="ChEBI" id="CHEBI:57945"/>
        <dbReference type="ChEBI" id="CHEBI:58766"/>
        <dbReference type="EC" id="1.2.1.72"/>
    </reaction>
</comment>
<comment type="pathway">
    <text evidence="1">Cofactor biosynthesis; pyridoxine 5'-phosphate biosynthesis; pyridoxine 5'-phosphate from D-erythrose 4-phosphate: step 1/5.</text>
</comment>
<comment type="subunit">
    <text evidence="1">Homotetramer.</text>
</comment>
<comment type="subcellular location">
    <subcellularLocation>
        <location evidence="1">Cytoplasm</location>
    </subcellularLocation>
</comment>
<comment type="similarity">
    <text evidence="1">Belongs to the glyceraldehyde-3-phosphate dehydrogenase family. Epd subfamily.</text>
</comment>
<feature type="chain" id="PRO_1000186832" description="D-erythrose-4-phosphate dehydrogenase">
    <location>
        <begin position="1"/>
        <end position="348"/>
    </location>
</feature>
<feature type="active site" description="Nucleophile" evidence="1">
    <location>
        <position position="155"/>
    </location>
</feature>
<feature type="binding site" evidence="1">
    <location>
        <begin position="12"/>
        <end position="13"/>
    </location>
    <ligand>
        <name>NAD(+)</name>
        <dbReference type="ChEBI" id="CHEBI:57540"/>
    </ligand>
</feature>
<feature type="binding site" evidence="1">
    <location>
        <position position="81"/>
    </location>
    <ligand>
        <name>NAD(+)</name>
        <dbReference type="ChEBI" id="CHEBI:57540"/>
    </ligand>
</feature>
<feature type="binding site" evidence="1">
    <location>
        <begin position="154"/>
        <end position="156"/>
    </location>
    <ligand>
        <name>substrate</name>
    </ligand>
</feature>
<feature type="binding site" evidence="1">
    <location>
        <position position="200"/>
    </location>
    <ligand>
        <name>substrate</name>
    </ligand>
</feature>
<feature type="binding site" evidence="1">
    <location>
        <begin position="213"/>
        <end position="214"/>
    </location>
    <ligand>
        <name>substrate</name>
    </ligand>
</feature>
<feature type="binding site" evidence="1">
    <location>
        <position position="236"/>
    </location>
    <ligand>
        <name>substrate</name>
    </ligand>
</feature>
<feature type="binding site" evidence="1">
    <location>
        <position position="318"/>
    </location>
    <ligand>
        <name>NAD(+)</name>
        <dbReference type="ChEBI" id="CHEBI:57540"/>
    </ligand>
</feature>
<feature type="site" description="Activates thiol group during catalysis" evidence="1">
    <location>
        <position position="182"/>
    </location>
</feature>
<organism>
    <name type="scientific">Salmonella agona (strain SL483)</name>
    <dbReference type="NCBI Taxonomy" id="454166"/>
    <lineage>
        <taxon>Bacteria</taxon>
        <taxon>Pseudomonadati</taxon>
        <taxon>Pseudomonadota</taxon>
        <taxon>Gammaproteobacteria</taxon>
        <taxon>Enterobacterales</taxon>
        <taxon>Enterobacteriaceae</taxon>
        <taxon>Salmonella</taxon>
    </lineage>
</organism>
<keyword id="KW-0963">Cytoplasm</keyword>
<keyword id="KW-0520">NAD</keyword>
<keyword id="KW-0560">Oxidoreductase</keyword>
<keyword id="KW-0664">Pyridoxine biosynthesis</keyword>
<dbReference type="EC" id="1.2.1.72" evidence="1"/>
<dbReference type="EMBL" id="CP001138">
    <property type="protein sequence ID" value="ACH52765.1"/>
    <property type="molecule type" value="Genomic_DNA"/>
</dbReference>
<dbReference type="RefSeq" id="WP_000218338.1">
    <property type="nucleotide sequence ID" value="NC_011149.1"/>
</dbReference>
<dbReference type="SMR" id="B5F5J5"/>
<dbReference type="KEGG" id="sea:SeAg_B3232"/>
<dbReference type="HOGENOM" id="CLU_030140_0_0_6"/>
<dbReference type="UniPathway" id="UPA00244">
    <property type="reaction ID" value="UER00309"/>
</dbReference>
<dbReference type="Proteomes" id="UP000008819">
    <property type="component" value="Chromosome"/>
</dbReference>
<dbReference type="GO" id="GO:0005737">
    <property type="term" value="C:cytoplasm"/>
    <property type="evidence" value="ECO:0007669"/>
    <property type="project" value="UniProtKB-SubCell"/>
</dbReference>
<dbReference type="GO" id="GO:0048001">
    <property type="term" value="F:erythrose-4-phosphate dehydrogenase activity"/>
    <property type="evidence" value="ECO:0007669"/>
    <property type="project" value="UniProtKB-UniRule"/>
</dbReference>
<dbReference type="GO" id="GO:0051287">
    <property type="term" value="F:NAD binding"/>
    <property type="evidence" value="ECO:0007669"/>
    <property type="project" value="InterPro"/>
</dbReference>
<dbReference type="GO" id="GO:0050661">
    <property type="term" value="F:NADP binding"/>
    <property type="evidence" value="ECO:0007669"/>
    <property type="project" value="InterPro"/>
</dbReference>
<dbReference type="GO" id="GO:0006006">
    <property type="term" value="P:glucose metabolic process"/>
    <property type="evidence" value="ECO:0007669"/>
    <property type="project" value="InterPro"/>
</dbReference>
<dbReference type="GO" id="GO:0042823">
    <property type="term" value="P:pyridoxal phosphate biosynthetic process"/>
    <property type="evidence" value="ECO:0007669"/>
    <property type="project" value="UniProtKB-UniRule"/>
</dbReference>
<dbReference type="GO" id="GO:0008615">
    <property type="term" value="P:pyridoxine biosynthetic process"/>
    <property type="evidence" value="ECO:0007669"/>
    <property type="project" value="UniProtKB-UniRule"/>
</dbReference>
<dbReference type="CDD" id="cd23937">
    <property type="entry name" value="GAPDH_C_E4PDH"/>
    <property type="match status" value="1"/>
</dbReference>
<dbReference type="CDD" id="cd17892">
    <property type="entry name" value="GAPDH_N_E4PDH"/>
    <property type="match status" value="1"/>
</dbReference>
<dbReference type="FunFam" id="3.30.360.10:FF:000007">
    <property type="entry name" value="D-erythrose-4-phosphate dehydrogenase"/>
    <property type="match status" value="1"/>
</dbReference>
<dbReference type="FunFam" id="3.40.50.720:FF:000001">
    <property type="entry name" value="Glyceraldehyde-3-phosphate dehydrogenase"/>
    <property type="match status" value="1"/>
</dbReference>
<dbReference type="Gene3D" id="3.30.360.10">
    <property type="entry name" value="Dihydrodipicolinate Reductase, domain 2"/>
    <property type="match status" value="1"/>
</dbReference>
<dbReference type="Gene3D" id="3.40.50.720">
    <property type="entry name" value="NAD(P)-binding Rossmann-like Domain"/>
    <property type="match status" value="1"/>
</dbReference>
<dbReference type="HAMAP" id="MF_01640">
    <property type="entry name" value="E4P_dehydrog"/>
    <property type="match status" value="1"/>
</dbReference>
<dbReference type="InterPro" id="IPR006422">
    <property type="entry name" value="E4P_DH_bac"/>
</dbReference>
<dbReference type="InterPro" id="IPR020831">
    <property type="entry name" value="GlycerAld/Erythrose_P_DH"/>
</dbReference>
<dbReference type="InterPro" id="IPR020830">
    <property type="entry name" value="GlycerAld_3-P_DH_AS"/>
</dbReference>
<dbReference type="InterPro" id="IPR020829">
    <property type="entry name" value="GlycerAld_3-P_DH_cat"/>
</dbReference>
<dbReference type="InterPro" id="IPR020828">
    <property type="entry name" value="GlycerAld_3-P_DH_NAD(P)-bd"/>
</dbReference>
<dbReference type="InterPro" id="IPR006424">
    <property type="entry name" value="Glyceraldehyde-3-P_DH_1"/>
</dbReference>
<dbReference type="InterPro" id="IPR036291">
    <property type="entry name" value="NAD(P)-bd_dom_sf"/>
</dbReference>
<dbReference type="NCBIfam" id="TIGR01532">
    <property type="entry name" value="E4PD_g-proteo"/>
    <property type="match status" value="1"/>
</dbReference>
<dbReference type="NCBIfam" id="TIGR01534">
    <property type="entry name" value="GAPDH-I"/>
    <property type="match status" value="1"/>
</dbReference>
<dbReference type="NCBIfam" id="NF010058">
    <property type="entry name" value="PRK13535.1"/>
    <property type="match status" value="1"/>
</dbReference>
<dbReference type="PANTHER" id="PTHR43148">
    <property type="entry name" value="GLYCERALDEHYDE-3-PHOSPHATE DEHYDROGENASE 2"/>
    <property type="match status" value="1"/>
</dbReference>
<dbReference type="Pfam" id="PF02800">
    <property type="entry name" value="Gp_dh_C"/>
    <property type="match status" value="1"/>
</dbReference>
<dbReference type="Pfam" id="PF00044">
    <property type="entry name" value="Gp_dh_N"/>
    <property type="match status" value="1"/>
</dbReference>
<dbReference type="PIRSF" id="PIRSF000149">
    <property type="entry name" value="GAP_DH"/>
    <property type="match status" value="1"/>
</dbReference>
<dbReference type="PRINTS" id="PR00078">
    <property type="entry name" value="G3PDHDRGNASE"/>
</dbReference>
<dbReference type="SMART" id="SM00846">
    <property type="entry name" value="Gp_dh_N"/>
    <property type="match status" value="1"/>
</dbReference>
<dbReference type="SUPFAM" id="SSF55347">
    <property type="entry name" value="Glyceraldehyde-3-phosphate dehydrogenase-like, C-terminal domain"/>
    <property type="match status" value="1"/>
</dbReference>
<dbReference type="SUPFAM" id="SSF51735">
    <property type="entry name" value="NAD(P)-binding Rossmann-fold domains"/>
    <property type="match status" value="1"/>
</dbReference>
<dbReference type="PROSITE" id="PS00071">
    <property type="entry name" value="GAPDH"/>
    <property type="match status" value="1"/>
</dbReference>
<sequence length="348" mass="38125">MTVRIAINGFGRIGRNVVRALYESGRRAEITVVAINELADAAGMAHLLKYDTSHGRFAWEVRHEREQLFVGDDVIRILHERTLADLPWRELGVDVVLDCTGVYGNREHGEAHIAAGAKKVLFSHPGSNDLDATVVFGVNQNQLRAEHRIVSNASCTTNCIIPVIKLLDDAYGIESGTVTTIHSAMNDQQVIDAYHSDLRRTRAASQSIIPVDTKLAAGITRIFPQFNDRFEAIAVRVPTINVTAIDLSVTVKKPVKASEVNQLLQKAAQGAFHGIVDYTESPLVSIDFNHDPHSAIVDGTQTRVSGAHLIKTLVWCDNEWGFANRMLDTTLAMAAVGFRLDASASTKL</sequence>
<protein>
    <recommendedName>
        <fullName evidence="1">D-erythrose-4-phosphate dehydrogenase</fullName>
        <shortName evidence="1">E4PDH</shortName>
        <ecNumber evidence="1">1.2.1.72</ecNumber>
    </recommendedName>
</protein>